<comment type="function">
    <text evidence="1">This protein is involved in the repair of mismatches in DNA. It is required for dam-dependent methyl-directed DNA mismatch repair. May act as a 'molecular matchmaker', a protein that promotes the formation of a stable complex between two or more DNA-binding proteins in an ATP-dependent manner without itself being part of a final effector complex.</text>
</comment>
<comment type="similarity">
    <text evidence="1">Belongs to the DNA mismatch repair MutL/HexB family.</text>
</comment>
<sequence>MPIQVLPPQLANQIAAGEVVERPASVVKELVENSLDAGATRIDIDIERGGAKLIRIRDNGSGIKKDELALALARHATSKIASLDDLEAIISLGFRGEALASISSVARLTLTSRTAEQQEAWQAYAEGRDQAVTVKPAAHPVGTTLEVLDLFYNTPARRKFMRTEKTEFGHIDEVVRRIALARFDVTINLNHNGKVIRQYRAVAQDGQRERRLGTICGAAFLEHALAIEWQHGDLTLRGWVADPLHTTPALAEIQYCYVNGRMMRDRLINHAIRQACEDKLGADQQPAFVLYLEIDPHQVDVNVHPAKHEVRFHQSRLVHDFIYQGVLSVLQQQLDAPLAEKDDPPTPRQMPENRIAAGGNQFARPSEAREAATRFSITSSREPAASGGSSGGASWPHAQPGYQKQQGALYRQLLDTPAAPRPAQPSAAPAELAGHSQSFGRVLTIVGGDCALLEREGSLALLSLTVAERWLRQAQLTPGTEAVCAQPLLIPLRLKVTEGEKRALAAAQSALTQLGIELHTDALHVTVRAVPLPLRQQNLQILIPELIGYLAQQNAFDVGNIAQWMARNLTSEQASWNMAQAIALLADVERLCPQLVKTPPGGLLQPVDLHSAMNALKDE</sequence>
<name>MUTL_KLEP3</name>
<feature type="chain" id="PRO_1000096658" description="DNA mismatch repair protein MutL">
    <location>
        <begin position="1"/>
        <end position="619"/>
    </location>
</feature>
<feature type="region of interest" description="Disordered" evidence="2">
    <location>
        <begin position="358"/>
        <end position="401"/>
    </location>
</feature>
<dbReference type="EMBL" id="CP000964">
    <property type="protein sequence ID" value="ACI08108.1"/>
    <property type="molecule type" value="Genomic_DNA"/>
</dbReference>
<dbReference type="SMR" id="B5Y334"/>
<dbReference type="KEGG" id="kpe:KPK_5100"/>
<dbReference type="HOGENOM" id="CLU_004131_5_1_6"/>
<dbReference type="Proteomes" id="UP000001734">
    <property type="component" value="Chromosome"/>
</dbReference>
<dbReference type="GO" id="GO:0032300">
    <property type="term" value="C:mismatch repair complex"/>
    <property type="evidence" value="ECO:0007669"/>
    <property type="project" value="InterPro"/>
</dbReference>
<dbReference type="GO" id="GO:0005524">
    <property type="term" value="F:ATP binding"/>
    <property type="evidence" value="ECO:0007669"/>
    <property type="project" value="InterPro"/>
</dbReference>
<dbReference type="GO" id="GO:0016887">
    <property type="term" value="F:ATP hydrolysis activity"/>
    <property type="evidence" value="ECO:0007669"/>
    <property type="project" value="InterPro"/>
</dbReference>
<dbReference type="GO" id="GO:0140664">
    <property type="term" value="F:ATP-dependent DNA damage sensor activity"/>
    <property type="evidence" value="ECO:0007669"/>
    <property type="project" value="InterPro"/>
</dbReference>
<dbReference type="GO" id="GO:0030983">
    <property type="term" value="F:mismatched DNA binding"/>
    <property type="evidence" value="ECO:0007669"/>
    <property type="project" value="InterPro"/>
</dbReference>
<dbReference type="GO" id="GO:0006298">
    <property type="term" value="P:mismatch repair"/>
    <property type="evidence" value="ECO:0007669"/>
    <property type="project" value="UniProtKB-UniRule"/>
</dbReference>
<dbReference type="CDD" id="cd16926">
    <property type="entry name" value="HATPase_MutL-MLH-PMS-like"/>
    <property type="match status" value="1"/>
</dbReference>
<dbReference type="CDD" id="cd03482">
    <property type="entry name" value="MutL_Trans_MutL"/>
    <property type="match status" value="1"/>
</dbReference>
<dbReference type="FunFam" id="3.30.230.10:FF:000013">
    <property type="entry name" value="DNA mismatch repair endonuclease MutL"/>
    <property type="match status" value="1"/>
</dbReference>
<dbReference type="FunFam" id="3.30.565.10:FF:000003">
    <property type="entry name" value="DNA mismatch repair endonuclease MutL"/>
    <property type="match status" value="1"/>
</dbReference>
<dbReference type="FunFam" id="3.30.1370.100:FF:000002">
    <property type="entry name" value="DNA mismatch repair protein MutL"/>
    <property type="match status" value="1"/>
</dbReference>
<dbReference type="Gene3D" id="3.30.230.10">
    <property type="match status" value="1"/>
</dbReference>
<dbReference type="Gene3D" id="3.30.565.10">
    <property type="entry name" value="Histidine kinase-like ATPase, C-terminal domain"/>
    <property type="match status" value="1"/>
</dbReference>
<dbReference type="Gene3D" id="3.30.1540.20">
    <property type="entry name" value="MutL, C-terminal domain, dimerisation subdomain"/>
    <property type="match status" value="1"/>
</dbReference>
<dbReference type="Gene3D" id="3.30.1370.100">
    <property type="entry name" value="MutL, C-terminal domain, regulatory subdomain"/>
    <property type="match status" value="1"/>
</dbReference>
<dbReference type="HAMAP" id="MF_00149">
    <property type="entry name" value="DNA_mis_repair"/>
    <property type="match status" value="1"/>
</dbReference>
<dbReference type="InterPro" id="IPR014762">
    <property type="entry name" value="DNA_mismatch_repair_CS"/>
</dbReference>
<dbReference type="InterPro" id="IPR020667">
    <property type="entry name" value="DNA_mismatch_repair_MutL"/>
</dbReference>
<dbReference type="InterPro" id="IPR013507">
    <property type="entry name" value="DNA_mismatch_S5_2-like"/>
</dbReference>
<dbReference type="InterPro" id="IPR036890">
    <property type="entry name" value="HATPase_C_sf"/>
</dbReference>
<dbReference type="InterPro" id="IPR002099">
    <property type="entry name" value="MutL/Mlh/PMS"/>
</dbReference>
<dbReference type="InterPro" id="IPR038973">
    <property type="entry name" value="MutL/Mlh/Pms-like"/>
</dbReference>
<dbReference type="InterPro" id="IPR014790">
    <property type="entry name" value="MutL_C"/>
</dbReference>
<dbReference type="InterPro" id="IPR042120">
    <property type="entry name" value="MutL_C_dimsub"/>
</dbReference>
<dbReference type="InterPro" id="IPR042121">
    <property type="entry name" value="MutL_C_regsub"/>
</dbReference>
<dbReference type="InterPro" id="IPR037198">
    <property type="entry name" value="MutL_C_sf"/>
</dbReference>
<dbReference type="InterPro" id="IPR020568">
    <property type="entry name" value="Ribosomal_Su5_D2-typ_SF"/>
</dbReference>
<dbReference type="InterPro" id="IPR014721">
    <property type="entry name" value="Ribsml_uS5_D2-typ_fold_subgr"/>
</dbReference>
<dbReference type="NCBIfam" id="TIGR00585">
    <property type="entry name" value="mutl"/>
    <property type="match status" value="1"/>
</dbReference>
<dbReference type="NCBIfam" id="NF000948">
    <property type="entry name" value="PRK00095.1-1"/>
    <property type="match status" value="1"/>
</dbReference>
<dbReference type="PANTHER" id="PTHR10073">
    <property type="entry name" value="DNA MISMATCH REPAIR PROTEIN MLH, PMS, MUTL"/>
    <property type="match status" value="1"/>
</dbReference>
<dbReference type="PANTHER" id="PTHR10073:SF12">
    <property type="entry name" value="DNA MISMATCH REPAIR PROTEIN MLH1"/>
    <property type="match status" value="1"/>
</dbReference>
<dbReference type="Pfam" id="PF01119">
    <property type="entry name" value="DNA_mis_repair"/>
    <property type="match status" value="1"/>
</dbReference>
<dbReference type="Pfam" id="PF13589">
    <property type="entry name" value="HATPase_c_3"/>
    <property type="match status" value="1"/>
</dbReference>
<dbReference type="Pfam" id="PF08676">
    <property type="entry name" value="MutL_C"/>
    <property type="match status" value="1"/>
</dbReference>
<dbReference type="SMART" id="SM01340">
    <property type="entry name" value="DNA_mis_repair"/>
    <property type="match status" value="1"/>
</dbReference>
<dbReference type="SMART" id="SM00853">
    <property type="entry name" value="MutL_C"/>
    <property type="match status" value="1"/>
</dbReference>
<dbReference type="SUPFAM" id="SSF55874">
    <property type="entry name" value="ATPase domain of HSP90 chaperone/DNA topoisomerase II/histidine kinase"/>
    <property type="match status" value="1"/>
</dbReference>
<dbReference type="SUPFAM" id="SSF118116">
    <property type="entry name" value="DNA mismatch repair protein MutL"/>
    <property type="match status" value="1"/>
</dbReference>
<dbReference type="SUPFAM" id="SSF54211">
    <property type="entry name" value="Ribosomal protein S5 domain 2-like"/>
    <property type="match status" value="1"/>
</dbReference>
<dbReference type="PROSITE" id="PS00058">
    <property type="entry name" value="DNA_MISMATCH_REPAIR_1"/>
    <property type="match status" value="1"/>
</dbReference>
<evidence type="ECO:0000255" key="1">
    <source>
        <dbReference type="HAMAP-Rule" id="MF_00149"/>
    </source>
</evidence>
<evidence type="ECO:0000256" key="2">
    <source>
        <dbReference type="SAM" id="MobiDB-lite"/>
    </source>
</evidence>
<reference key="1">
    <citation type="journal article" date="2008" name="PLoS Genet.">
        <title>Complete genome sequence of the N2-fixing broad host range endophyte Klebsiella pneumoniae 342 and virulence predictions verified in mice.</title>
        <authorList>
            <person name="Fouts D.E."/>
            <person name="Tyler H.L."/>
            <person name="DeBoy R.T."/>
            <person name="Daugherty S."/>
            <person name="Ren Q."/>
            <person name="Badger J.H."/>
            <person name="Durkin A.S."/>
            <person name="Huot H."/>
            <person name="Shrivastava S."/>
            <person name="Kothari S."/>
            <person name="Dodson R.J."/>
            <person name="Mohamoud Y."/>
            <person name="Khouri H."/>
            <person name="Roesch L.F.W."/>
            <person name="Krogfelt K.A."/>
            <person name="Struve C."/>
            <person name="Triplett E.W."/>
            <person name="Methe B.A."/>
        </authorList>
    </citation>
    <scope>NUCLEOTIDE SEQUENCE [LARGE SCALE GENOMIC DNA]</scope>
    <source>
        <strain>342</strain>
    </source>
</reference>
<protein>
    <recommendedName>
        <fullName evidence="1">DNA mismatch repair protein MutL</fullName>
    </recommendedName>
</protein>
<accession>B5Y334</accession>
<gene>
    <name evidence="1" type="primary">mutL</name>
    <name type="ordered locus">KPK_5100</name>
</gene>
<proteinExistence type="inferred from homology"/>
<organism>
    <name type="scientific">Klebsiella pneumoniae (strain 342)</name>
    <dbReference type="NCBI Taxonomy" id="507522"/>
    <lineage>
        <taxon>Bacteria</taxon>
        <taxon>Pseudomonadati</taxon>
        <taxon>Pseudomonadota</taxon>
        <taxon>Gammaproteobacteria</taxon>
        <taxon>Enterobacterales</taxon>
        <taxon>Enterobacteriaceae</taxon>
        <taxon>Klebsiella/Raoultella group</taxon>
        <taxon>Klebsiella</taxon>
        <taxon>Klebsiella pneumoniae complex</taxon>
    </lineage>
</organism>
<keyword id="KW-0227">DNA damage</keyword>
<keyword id="KW-0234">DNA repair</keyword>